<proteinExistence type="inferred from homology"/>
<dbReference type="EMBL" id="CP000950">
    <property type="protein sequence ID" value="ACA68432.1"/>
    <property type="molecule type" value="Genomic_DNA"/>
</dbReference>
<dbReference type="RefSeq" id="WP_012304107.1">
    <property type="nucleotide sequence ID" value="NZ_CP009792.1"/>
</dbReference>
<dbReference type="SMR" id="B1JLL3"/>
<dbReference type="KEGG" id="ypy:YPK_2146"/>
<dbReference type="PATRIC" id="fig|502800.11.peg.2819"/>
<dbReference type="GO" id="GO:0005829">
    <property type="term" value="C:cytosol"/>
    <property type="evidence" value="ECO:0007669"/>
    <property type="project" value="TreeGrafter"/>
</dbReference>
<dbReference type="GO" id="GO:0003677">
    <property type="term" value="F:DNA binding"/>
    <property type="evidence" value="ECO:0007669"/>
    <property type="project" value="UniProtKB-UniRule"/>
</dbReference>
<dbReference type="GO" id="GO:0006355">
    <property type="term" value="P:regulation of DNA-templated transcription"/>
    <property type="evidence" value="ECO:0007669"/>
    <property type="project" value="UniProtKB-UniRule"/>
</dbReference>
<dbReference type="FunFam" id="1.10.10.200:FF:000001">
    <property type="entry name" value="Probable transcriptional regulatory protein YebC"/>
    <property type="match status" value="1"/>
</dbReference>
<dbReference type="FunFam" id="3.30.70.980:FF:000002">
    <property type="entry name" value="Probable transcriptional regulatory protein YebC"/>
    <property type="match status" value="1"/>
</dbReference>
<dbReference type="Gene3D" id="1.10.10.200">
    <property type="match status" value="1"/>
</dbReference>
<dbReference type="Gene3D" id="3.30.70.980">
    <property type="match status" value="2"/>
</dbReference>
<dbReference type="HAMAP" id="MF_00693">
    <property type="entry name" value="Transcrip_reg_TACO1"/>
    <property type="match status" value="1"/>
</dbReference>
<dbReference type="InterPro" id="IPR017856">
    <property type="entry name" value="Integrase-like_N"/>
</dbReference>
<dbReference type="InterPro" id="IPR048300">
    <property type="entry name" value="TACO1_YebC-like_2nd/3rd_dom"/>
</dbReference>
<dbReference type="InterPro" id="IPR049083">
    <property type="entry name" value="TACO1_YebC_N"/>
</dbReference>
<dbReference type="InterPro" id="IPR002876">
    <property type="entry name" value="Transcrip_reg_TACO1-like"/>
</dbReference>
<dbReference type="InterPro" id="IPR026564">
    <property type="entry name" value="Transcrip_reg_TACO1-like_dom3"/>
</dbReference>
<dbReference type="InterPro" id="IPR029072">
    <property type="entry name" value="YebC-like"/>
</dbReference>
<dbReference type="NCBIfam" id="NF001030">
    <property type="entry name" value="PRK00110.1"/>
    <property type="match status" value="1"/>
</dbReference>
<dbReference type="NCBIfam" id="NF009044">
    <property type="entry name" value="PRK12378.1"/>
    <property type="match status" value="1"/>
</dbReference>
<dbReference type="NCBIfam" id="TIGR01033">
    <property type="entry name" value="YebC/PmpR family DNA-binding transcriptional regulator"/>
    <property type="match status" value="1"/>
</dbReference>
<dbReference type="PANTHER" id="PTHR12532:SF6">
    <property type="entry name" value="TRANSCRIPTIONAL REGULATORY PROTEIN YEBC-RELATED"/>
    <property type="match status" value="1"/>
</dbReference>
<dbReference type="PANTHER" id="PTHR12532">
    <property type="entry name" value="TRANSLATIONAL ACTIVATOR OF CYTOCHROME C OXIDASE 1"/>
    <property type="match status" value="1"/>
</dbReference>
<dbReference type="Pfam" id="PF20772">
    <property type="entry name" value="TACO1_YebC_N"/>
    <property type="match status" value="1"/>
</dbReference>
<dbReference type="Pfam" id="PF01709">
    <property type="entry name" value="Transcrip_reg"/>
    <property type="match status" value="1"/>
</dbReference>
<dbReference type="SUPFAM" id="SSF75625">
    <property type="entry name" value="YebC-like"/>
    <property type="match status" value="1"/>
</dbReference>
<feature type="chain" id="PRO_1000132263" description="Probable transcriptional regulatory protein YPK_2146">
    <location>
        <begin position="1"/>
        <end position="247"/>
    </location>
</feature>
<evidence type="ECO:0000255" key="1">
    <source>
        <dbReference type="HAMAP-Rule" id="MF_00693"/>
    </source>
</evidence>
<comment type="subcellular location">
    <subcellularLocation>
        <location evidence="1">Cytoplasm</location>
    </subcellularLocation>
</comment>
<comment type="similarity">
    <text evidence="1">Belongs to the TACO1 family.</text>
</comment>
<gene>
    <name type="ordered locus">YPK_2146</name>
</gene>
<accession>B1JLL3</accession>
<organism>
    <name type="scientific">Yersinia pseudotuberculosis serotype O:3 (strain YPIII)</name>
    <dbReference type="NCBI Taxonomy" id="502800"/>
    <lineage>
        <taxon>Bacteria</taxon>
        <taxon>Pseudomonadati</taxon>
        <taxon>Pseudomonadota</taxon>
        <taxon>Gammaproteobacteria</taxon>
        <taxon>Enterobacterales</taxon>
        <taxon>Yersiniaceae</taxon>
        <taxon>Yersinia</taxon>
    </lineage>
</organism>
<reference key="1">
    <citation type="submission" date="2008-02" db="EMBL/GenBank/DDBJ databases">
        <title>Complete sequence of Yersinia pseudotuberculosis YPIII.</title>
        <authorList>
            <consortium name="US DOE Joint Genome Institute"/>
            <person name="Copeland A."/>
            <person name="Lucas S."/>
            <person name="Lapidus A."/>
            <person name="Glavina del Rio T."/>
            <person name="Dalin E."/>
            <person name="Tice H."/>
            <person name="Bruce D."/>
            <person name="Goodwin L."/>
            <person name="Pitluck S."/>
            <person name="Munk A.C."/>
            <person name="Brettin T."/>
            <person name="Detter J.C."/>
            <person name="Han C."/>
            <person name="Tapia R."/>
            <person name="Schmutz J."/>
            <person name="Larimer F."/>
            <person name="Land M."/>
            <person name="Hauser L."/>
            <person name="Challacombe J.F."/>
            <person name="Green L."/>
            <person name="Lindler L.E."/>
            <person name="Nikolich M.P."/>
            <person name="Richardson P."/>
        </authorList>
    </citation>
    <scope>NUCLEOTIDE SEQUENCE [LARGE SCALE GENOMIC DNA]</scope>
    <source>
        <strain>YPIII</strain>
    </source>
</reference>
<protein>
    <recommendedName>
        <fullName evidence="1">Probable transcriptional regulatory protein YPK_2146</fullName>
    </recommendedName>
</protein>
<sequence>MAGHSKWANTKHRKAAQDAKRGKIFTKIIRELVTAARLGGGDPGANPRLRAAIDKALSNNMTRDTLNRAIARGVGGDEDNNMETIIYEGYGPGGTAVMVECLSDNRNRTVSEVRHAFTKTGGNLGTDGSVSYLFTKKGVISYAPGLEEDTVMDAALEAGADDIVVYDDGAIDVFTAWESLGAVKDVLDATGLVAEGAEVSLIPSTKAELDAETAPKLLRLIDMLEDSDDVQEVYHNGEISDEVAATL</sequence>
<name>Y2146_YERPY</name>
<keyword id="KW-0963">Cytoplasm</keyword>
<keyword id="KW-0238">DNA-binding</keyword>
<keyword id="KW-0804">Transcription</keyword>
<keyword id="KW-0805">Transcription regulation</keyword>